<sequence length="129" mass="14284">MAKYLAQIIVMGAQVVGRAFARALRQEFAASQAAAEARGQAGRQSAAASSFTGMTLQEAQQILNISTLTPEEIQKNYEHLFKVNDKAVGGSFYIQSKVVRAKERLDEELSINQQQQTKNKHADEQQQQT</sequence>
<accession>Q6PBL0</accession>
<reference key="1">
    <citation type="submission" date="2003-10" db="EMBL/GenBank/DDBJ databases">
        <authorList>
            <consortium name="NIH - Zebrafish Gene Collection (ZGC) project"/>
        </authorList>
    </citation>
    <scope>NUCLEOTIDE SEQUENCE [LARGE SCALE MRNA]</scope>
    <source>
        <tissue>Eye</tissue>
    </source>
</reference>
<proteinExistence type="evidence at transcript level"/>
<feature type="chain" id="PRO_0000214081" description="Mitochondrial import inner membrane translocase subunit tim16">
    <location>
        <begin position="1"/>
        <end position="129"/>
    </location>
</feature>
<feature type="region of interest" description="J-like">
    <location>
        <begin position="58"/>
        <end position="110"/>
    </location>
</feature>
<feature type="region of interest" description="Disordered" evidence="2">
    <location>
        <begin position="110"/>
        <end position="129"/>
    </location>
</feature>
<feature type="compositionally biased region" description="Basic and acidic residues" evidence="2">
    <location>
        <begin position="120"/>
        <end position="129"/>
    </location>
</feature>
<organism>
    <name type="scientific">Danio rerio</name>
    <name type="common">Zebrafish</name>
    <name type="synonym">Brachydanio rerio</name>
    <dbReference type="NCBI Taxonomy" id="7955"/>
    <lineage>
        <taxon>Eukaryota</taxon>
        <taxon>Metazoa</taxon>
        <taxon>Chordata</taxon>
        <taxon>Craniata</taxon>
        <taxon>Vertebrata</taxon>
        <taxon>Euteleostomi</taxon>
        <taxon>Actinopterygii</taxon>
        <taxon>Neopterygii</taxon>
        <taxon>Teleostei</taxon>
        <taxon>Ostariophysi</taxon>
        <taxon>Cypriniformes</taxon>
        <taxon>Danionidae</taxon>
        <taxon>Danioninae</taxon>
        <taxon>Danio</taxon>
    </lineage>
</organism>
<comment type="function">
    <text evidence="1">Regulates ATP-dependent protein translocation into the mitochondrial matrix.</text>
</comment>
<comment type="subunit">
    <text evidence="1">Probable component of the PAM complex at least composed of a mitochondrial HSP70 protein, GRPE, TIMM44, TIMM16/PAM16 and TIMM14. Associates with the TIM23 complex.</text>
</comment>
<comment type="subcellular location">
    <subcellularLocation>
        <location evidence="1">Mitochondrion inner membrane</location>
        <topology evidence="1">Peripheral membrane protein</topology>
        <orientation evidence="1">Matrix side</orientation>
    </subcellularLocation>
</comment>
<comment type="domain">
    <text evidence="1">The J-like region, although related to the J domain does not have co-chaperone activity.</text>
</comment>
<comment type="similarity">
    <text evidence="3">Belongs to the TIM16/PAM16 family.</text>
</comment>
<evidence type="ECO:0000250" key="1"/>
<evidence type="ECO:0000256" key="2">
    <source>
        <dbReference type="SAM" id="MobiDB-lite"/>
    </source>
</evidence>
<evidence type="ECO:0000305" key="3"/>
<protein>
    <recommendedName>
        <fullName>Mitochondrial import inner membrane translocase subunit tim16</fullName>
    </recommendedName>
    <alternativeName>
        <fullName>Presequence translocated-associated motor subunit pam16</fullName>
    </alternativeName>
</protein>
<keyword id="KW-0472">Membrane</keyword>
<keyword id="KW-0496">Mitochondrion</keyword>
<keyword id="KW-0999">Mitochondrion inner membrane</keyword>
<keyword id="KW-0653">Protein transport</keyword>
<keyword id="KW-1185">Reference proteome</keyword>
<keyword id="KW-0811">Translocation</keyword>
<keyword id="KW-0813">Transport</keyword>
<dbReference type="EMBL" id="BC059670">
    <property type="protein sequence ID" value="AAH59670.1"/>
    <property type="molecule type" value="mRNA"/>
</dbReference>
<dbReference type="SMR" id="Q6PBL0"/>
<dbReference type="FunCoup" id="Q6PBL0">
    <property type="interactions" value="1499"/>
</dbReference>
<dbReference type="STRING" id="7955.ENSDARP00000133623"/>
<dbReference type="PaxDb" id="7955-ENSDARP00000054355"/>
<dbReference type="AGR" id="ZFIN:ZDB-GENE-040426-1776"/>
<dbReference type="ZFIN" id="ZDB-GENE-040426-1776">
    <property type="gene designation" value="pam16"/>
</dbReference>
<dbReference type="eggNOG" id="KOG3442">
    <property type="taxonomic scope" value="Eukaryota"/>
</dbReference>
<dbReference type="InParanoid" id="Q6PBL0"/>
<dbReference type="PhylomeDB" id="Q6PBL0"/>
<dbReference type="PRO" id="PR:Q6PBL0"/>
<dbReference type="Proteomes" id="UP000000437">
    <property type="component" value="Unplaced"/>
</dbReference>
<dbReference type="GO" id="GO:0005744">
    <property type="term" value="C:TIM23 mitochondrial import inner membrane translocase complex"/>
    <property type="evidence" value="ECO:0000318"/>
    <property type="project" value="GO_Central"/>
</dbReference>
<dbReference type="GO" id="GO:0030150">
    <property type="term" value="P:protein import into mitochondrial matrix"/>
    <property type="evidence" value="ECO:0000318"/>
    <property type="project" value="GO_Central"/>
</dbReference>
<dbReference type="FunFam" id="1.10.287.110:FF:000006">
    <property type="entry name" value="Import inner membrane translocase subunit TIM16"/>
    <property type="match status" value="1"/>
</dbReference>
<dbReference type="Gene3D" id="1.10.287.110">
    <property type="entry name" value="DnaJ domain"/>
    <property type="match status" value="1"/>
</dbReference>
<dbReference type="InterPro" id="IPR036869">
    <property type="entry name" value="J_dom_sf"/>
</dbReference>
<dbReference type="InterPro" id="IPR005341">
    <property type="entry name" value="Tim16"/>
</dbReference>
<dbReference type="PANTHER" id="PTHR12388">
    <property type="entry name" value="MITOCHONDRIA ASSOCIATED GRANULOCYTE MACROPHAGE CSF SIGNALING MOLECULE"/>
    <property type="match status" value="1"/>
</dbReference>
<dbReference type="PANTHER" id="PTHR12388:SF0">
    <property type="entry name" value="MITOCHONDRIAL IMPORT INNER MEMBRANE TRANSLOCASE SUBUNIT TIM16"/>
    <property type="match status" value="1"/>
</dbReference>
<dbReference type="Pfam" id="PF03656">
    <property type="entry name" value="Pam16"/>
    <property type="match status" value="1"/>
</dbReference>
<name>TIM16_DANRE</name>
<gene>
    <name type="primary">pam16</name>
    <name type="synonym">tim16</name>
    <name type="synonym">timm16</name>
    <name type="ORF">zgc:73356</name>
</gene>